<proteinExistence type="inferred from homology"/>
<keyword id="KW-0009">Actin-binding</keyword>
<keyword id="KW-0963">Cytoplasm</keyword>
<keyword id="KW-0206">Cytoskeleton</keyword>
<keyword id="KW-1185">Reference proteome</keyword>
<sequence length="46" mass="5194">MSDNPVKEEVQQFDKKCLKKTNTAEKNTLPTKEDIDQEKKAAEGGK</sequence>
<reference key="1">
    <citation type="submission" date="1999-06" db="EMBL/GenBank/DDBJ databases">
        <title>Molecular cloning of carp (Cyprinus carpio) thymosin beta a.</title>
        <authorList>
            <person name="Fujiki K."/>
            <person name="Nakao M."/>
            <person name="Shin D."/>
            <person name="Yano T."/>
        </authorList>
    </citation>
    <scope>NUCLEOTIDE SEQUENCE [MRNA]</scope>
</reference>
<name>TYBA_CYPCA</name>
<feature type="initiator methionine" description="Removed" evidence="1">
    <location>
        <position position="1"/>
    </location>
</feature>
<feature type="chain" id="PRO_0000045935" description="Thymosin beta-a">
    <location>
        <begin position="2"/>
        <end position="46"/>
    </location>
</feature>
<feature type="region of interest" description="Disordered" evidence="2">
    <location>
        <begin position="21"/>
        <end position="46"/>
    </location>
</feature>
<feature type="compositionally biased region" description="Polar residues" evidence="2">
    <location>
        <begin position="21"/>
        <end position="30"/>
    </location>
</feature>
<feature type="compositionally biased region" description="Basic and acidic residues" evidence="2">
    <location>
        <begin position="31"/>
        <end position="46"/>
    </location>
</feature>
<protein>
    <recommendedName>
        <fullName>Thymosin beta-a</fullName>
    </recommendedName>
</protein>
<organism>
    <name type="scientific">Cyprinus carpio</name>
    <name type="common">Common carp</name>
    <dbReference type="NCBI Taxonomy" id="7962"/>
    <lineage>
        <taxon>Eukaryota</taxon>
        <taxon>Metazoa</taxon>
        <taxon>Chordata</taxon>
        <taxon>Craniata</taxon>
        <taxon>Vertebrata</taxon>
        <taxon>Euteleostomi</taxon>
        <taxon>Actinopterygii</taxon>
        <taxon>Neopterygii</taxon>
        <taxon>Teleostei</taxon>
        <taxon>Ostariophysi</taxon>
        <taxon>Cypriniformes</taxon>
        <taxon>Cyprinidae</taxon>
        <taxon>Cyprininae</taxon>
        <taxon>Cyprinus</taxon>
    </lineage>
</organism>
<comment type="function">
    <text evidence="1">Plays an important role in the organization of the cytoskeleton. Binds to and sequesters actin monomers (G actin) and therefore inhibits actin polymerization (By similarity).</text>
</comment>
<comment type="subcellular location">
    <subcellularLocation>
        <location evidence="1">Cytoplasm</location>
        <location evidence="1">Cytoskeleton</location>
    </subcellularLocation>
</comment>
<comment type="similarity">
    <text evidence="3">Belongs to the thymosin beta family.</text>
</comment>
<evidence type="ECO:0000250" key="1"/>
<evidence type="ECO:0000256" key="2">
    <source>
        <dbReference type="SAM" id="MobiDB-lite"/>
    </source>
</evidence>
<evidence type="ECO:0000305" key="3"/>
<dbReference type="EMBL" id="AB028456">
    <property type="protein sequence ID" value="BAA96492.1"/>
    <property type="molecule type" value="mRNA"/>
</dbReference>
<dbReference type="RefSeq" id="XP_018939378.1">
    <property type="nucleotide sequence ID" value="XM_019083833.2"/>
</dbReference>
<dbReference type="SMR" id="Q9I955"/>
<dbReference type="Ensembl" id="ENSCCRT00010031614.1">
    <property type="protein sequence ID" value="ENSCCRP00010028822.1"/>
    <property type="gene ID" value="ENSCCRG00010012315.1"/>
</dbReference>
<dbReference type="Ensembl" id="ENSCCRT00015119094.1">
    <property type="protein sequence ID" value="ENSCCRP00015115437.1"/>
    <property type="gene ID" value="ENSCCRG00015045633.1"/>
</dbReference>
<dbReference type="Ensembl" id="ENSCCRT00020097175.1">
    <property type="protein sequence ID" value="ENSCCRP00020088885.1"/>
    <property type="gene ID" value="ENSCCRG00020040796.1"/>
</dbReference>
<dbReference type="GeneID" id="109066813"/>
<dbReference type="KEGG" id="ccar:109066813"/>
<dbReference type="CTD" id="798430"/>
<dbReference type="OrthoDB" id="2151618at2759"/>
<dbReference type="Proteomes" id="UP000694384">
    <property type="component" value="Unplaced"/>
</dbReference>
<dbReference type="Proteomes" id="UP000694427">
    <property type="component" value="Unplaced"/>
</dbReference>
<dbReference type="Proteomes" id="UP000694700">
    <property type="component" value="Unplaced"/>
</dbReference>
<dbReference type="Proteomes" id="UP000694701">
    <property type="component" value="Unplaced"/>
</dbReference>
<dbReference type="Proteomes" id="UP001155660">
    <property type="component" value="Chromosome B14"/>
</dbReference>
<dbReference type="GO" id="GO:0005737">
    <property type="term" value="C:cytoplasm"/>
    <property type="evidence" value="ECO:0007669"/>
    <property type="project" value="UniProtKB-KW"/>
</dbReference>
<dbReference type="GO" id="GO:0005856">
    <property type="term" value="C:cytoskeleton"/>
    <property type="evidence" value="ECO:0007669"/>
    <property type="project" value="UniProtKB-SubCell"/>
</dbReference>
<dbReference type="GO" id="GO:0003785">
    <property type="term" value="F:actin monomer binding"/>
    <property type="evidence" value="ECO:0007669"/>
    <property type="project" value="InterPro"/>
</dbReference>
<dbReference type="GO" id="GO:0007015">
    <property type="term" value="P:actin filament organization"/>
    <property type="evidence" value="ECO:0007669"/>
    <property type="project" value="InterPro"/>
</dbReference>
<dbReference type="GO" id="GO:0030334">
    <property type="term" value="P:regulation of cell migration"/>
    <property type="evidence" value="ECO:0007669"/>
    <property type="project" value="TreeGrafter"/>
</dbReference>
<dbReference type="FunFam" id="1.20.5.520:FF:000001">
    <property type="entry name" value="Thymosin beta"/>
    <property type="match status" value="1"/>
</dbReference>
<dbReference type="Gene3D" id="1.20.5.520">
    <property type="entry name" value="Single helix bin"/>
    <property type="match status" value="1"/>
</dbReference>
<dbReference type="InterPro" id="IPR001152">
    <property type="entry name" value="Beta-thymosin"/>
</dbReference>
<dbReference type="InterPro" id="IPR038386">
    <property type="entry name" value="Beta-thymosin_sf"/>
</dbReference>
<dbReference type="PANTHER" id="PTHR12021">
    <property type="entry name" value="THYMOSIN BETA"/>
    <property type="match status" value="1"/>
</dbReference>
<dbReference type="PANTHER" id="PTHR12021:SF3">
    <property type="entry name" value="THYMOSIN BETA-4-LIKE"/>
    <property type="match status" value="1"/>
</dbReference>
<dbReference type="Pfam" id="PF01290">
    <property type="entry name" value="Thymosin"/>
    <property type="match status" value="1"/>
</dbReference>
<dbReference type="PIRSF" id="PIRSF001828">
    <property type="entry name" value="Thymosin_beta"/>
    <property type="match status" value="1"/>
</dbReference>
<dbReference type="SMART" id="SM00152">
    <property type="entry name" value="THY"/>
    <property type="match status" value="1"/>
</dbReference>
<dbReference type="PROSITE" id="PS00500">
    <property type="entry name" value="THYMOSIN_B4"/>
    <property type="match status" value="1"/>
</dbReference>
<accession>Q9I955</accession>